<proteinExistence type="evidence at transcript level"/>
<sequence>MATTNVEENKQTQEQQPKEIKHQEVGHKSLLQSDALFQYILETSVYPREPEPMKELRDITAKHPWNLMTTSADEGQFLNMLLKLINAKNTIEIGVYTGYSLLASALALPDDGKILAMDINRENYELGLPVIQKAGVAHKIDFREGPALPVLDLLIEDAKNHGSFDFAFVDADKDNYGNYHKRLIDLVKIGGVIGYDNTLWNGSVAAPADAPMRKYVRYYRDFVMEFNKAIAADPRVEICQLPVGDGITLCRRIS</sequence>
<name>CAMT_MESCR</name>
<keyword id="KW-0438">Lignin biosynthesis</keyword>
<keyword id="KW-0479">Metal-binding</keyword>
<keyword id="KW-0489">Methyltransferase</keyword>
<keyword id="KW-0949">S-adenosyl-L-methionine</keyword>
<keyword id="KW-0346">Stress response</keyword>
<keyword id="KW-0808">Transferase</keyword>
<protein>
    <recommendedName>
        <fullName>Caffeoyl-CoA O-methyltransferase</fullName>
        <ecNumber>2.1.1.104</ecNumber>
    </recommendedName>
    <alternativeName>
        <fullName>Trans-caffeoyl-CoA 3-O-methyltransferase</fullName>
        <shortName>CCoAMT</shortName>
        <shortName>CCoAOMT</shortName>
    </alternativeName>
</protein>
<feature type="chain" id="PRO_0000165687" description="Caffeoyl-CoA O-methyltransferase">
    <location>
        <begin position="1"/>
        <end position="254"/>
    </location>
</feature>
<feature type="region of interest" description="Disordered" evidence="3">
    <location>
        <begin position="1"/>
        <end position="25"/>
    </location>
</feature>
<feature type="compositionally biased region" description="Basic and acidic residues" evidence="3">
    <location>
        <begin position="7"/>
        <end position="25"/>
    </location>
</feature>
<feature type="binding site" evidence="1">
    <location>
        <position position="28"/>
    </location>
    <ligand>
        <name>substrate</name>
    </ligand>
</feature>
<feature type="binding site" evidence="2">
    <location>
        <position position="70"/>
    </location>
    <ligand>
        <name>S-adenosyl-L-methionine</name>
        <dbReference type="ChEBI" id="CHEBI:59789"/>
    </ligand>
</feature>
<feature type="binding site" evidence="2">
    <location>
        <position position="92"/>
    </location>
    <ligand>
        <name>S-adenosyl-L-methionine</name>
        <dbReference type="ChEBI" id="CHEBI:59789"/>
    </ligand>
</feature>
<feature type="binding site" evidence="2">
    <location>
        <begin position="94"/>
        <end position="95"/>
    </location>
    <ligand>
        <name>S-adenosyl-L-methionine</name>
        <dbReference type="ChEBI" id="CHEBI:59789"/>
    </ligand>
</feature>
<feature type="binding site" evidence="2">
    <location>
        <position position="100"/>
    </location>
    <ligand>
        <name>S-adenosyl-L-methionine</name>
        <dbReference type="ChEBI" id="CHEBI:59789"/>
    </ligand>
</feature>
<feature type="binding site" evidence="2">
    <location>
        <position position="118"/>
    </location>
    <ligand>
        <name>S-adenosyl-L-methionine</name>
        <dbReference type="ChEBI" id="CHEBI:59789"/>
    </ligand>
</feature>
<feature type="binding site" evidence="2">
    <location>
        <position position="147"/>
    </location>
    <ligand>
        <name>S-adenosyl-L-methionine</name>
        <dbReference type="ChEBI" id="CHEBI:59789"/>
    </ligand>
</feature>
<feature type="binding site" evidence="2">
    <location>
        <position position="170"/>
    </location>
    <ligand>
        <name>a divalent metal cation</name>
        <dbReference type="ChEBI" id="CHEBI:60240"/>
    </ligand>
</feature>
<feature type="binding site" evidence="1">
    <location>
        <position position="170"/>
    </location>
    <ligand>
        <name>substrate</name>
    </ligand>
</feature>
<feature type="binding site" evidence="2">
    <location>
        <position position="172"/>
    </location>
    <ligand>
        <name>S-adenosyl-L-methionine</name>
        <dbReference type="ChEBI" id="CHEBI:59789"/>
    </ligand>
</feature>
<feature type="binding site" evidence="2">
    <location>
        <position position="196"/>
    </location>
    <ligand>
        <name>a divalent metal cation</name>
        <dbReference type="ChEBI" id="CHEBI:60240"/>
    </ligand>
</feature>
<feature type="binding site" evidence="2">
    <location>
        <position position="197"/>
    </location>
    <ligand>
        <name>a divalent metal cation</name>
        <dbReference type="ChEBI" id="CHEBI:60240"/>
    </ligand>
</feature>
<feature type="binding site" evidence="1">
    <location>
        <position position="201"/>
    </location>
    <ligand>
        <name>substrate</name>
    </ligand>
</feature>
<dbReference type="EC" id="2.1.1.104"/>
<dbReference type="EMBL" id="AF053553">
    <property type="protein sequence ID" value="AAC08395.1"/>
    <property type="molecule type" value="mRNA"/>
</dbReference>
<dbReference type="PIR" id="T12206">
    <property type="entry name" value="T12206"/>
</dbReference>
<dbReference type="SMR" id="O65162"/>
<dbReference type="UniPathway" id="UPA00711"/>
<dbReference type="GO" id="GO:0042409">
    <property type="term" value="F:caffeoyl-CoA O-methyltransferase activity"/>
    <property type="evidence" value="ECO:0007669"/>
    <property type="project" value="UniProtKB-EC"/>
</dbReference>
<dbReference type="GO" id="GO:0046872">
    <property type="term" value="F:metal ion binding"/>
    <property type="evidence" value="ECO:0007669"/>
    <property type="project" value="UniProtKB-KW"/>
</dbReference>
<dbReference type="GO" id="GO:0009809">
    <property type="term" value="P:lignin biosynthetic process"/>
    <property type="evidence" value="ECO:0007669"/>
    <property type="project" value="UniProtKB-KW"/>
</dbReference>
<dbReference type="GO" id="GO:0032259">
    <property type="term" value="P:methylation"/>
    <property type="evidence" value="ECO:0007669"/>
    <property type="project" value="UniProtKB-KW"/>
</dbReference>
<dbReference type="CDD" id="cd02440">
    <property type="entry name" value="AdoMet_MTases"/>
    <property type="match status" value="1"/>
</dbReference>
<dbReference type="FunFam" id="3.40.50.150:FF:000147">
    <property type="entry name" value="Caffeoyl-CoA O-methyltransferase 1"/>
    <property type="match status" value="1"/>
</dbReference>
<dbReference type="Gene3D" id="3.40.50.150">
    <property type="entry name" value="Vaccinia Virus protein VP39"/>
    <property type="match status" value="1"/>
</dbReference>
<dbReference type="InterPro" id="IPR050362">
    <property type="entry name" value="Cation-dep_OMT"/>
</dbReference>
<dbReference type="InterPro" id="IPR029063">
    <property type="entry name" value="SAM-dependent_MTases_sf"/>
</dbReference>
<dbReference type="InterPro" id="IPR002935">
    <property type="entry name" value="SAM_O-MeTrfase"/>
</dbReference>
<dbReference type="PANTHER" id="PTHR10509:SF81">
    <property type="entry name" value="CAFFEOYL-COA O-METHYLTRANSFERASE 1"/>
    <property type="match status" value="1"/>
</dbReference>
<dbReference type="PANTHER" id="PTHR10509">
    <property type="entry name" value="O-METHYLTRANSFERASE-RELATED"/>
    <property type="match status" value="1"/>
</dbReference>
<dbReference type="Pfam" id="PF01596">
    <property type="entry name" value="Methyltransf_3"/>
    <property type="match status" value="1"/>
</dbReference>
<dbReference type="SUPFAM" id="SSF53335">
    <property type="entry name" value="S-adenosyl-L-methionine-dependent methyltransferases"/>
    <property type="match status" value="1"/>
</dbReference>
<dbReference type="PROSITE" id="PS51682">
    <property type="entry name" value="SAM_OMT_I"/>
    <property type="match status" value="1"/>
</dbReference>
<comment type="function">
    <text>Methylates caffeoyl-CoA to feruloyl-CoA and 5-hydroxyferuloyl-CoA to sinapoyl-CoA. Plays a role in the synthesis of feruloylated polysaccharides. Involved in the reinforcement of the plant cell wall. Also involved in the responding to wounding or pathogen challenge by the increased formation of cell wall-bound ferulic acid polymers.</text>
</comment>
<comment type="catalytic activity">
    <reaction>
        <text>(E)-caffeoyl-CoA + S-adenosyl-L-methionine = (E)-feruloyl-CoA + S-adenosyl-L-homocysteine + H(+)</text>
        <dbReference type="Rhea" id="RHEA:16925"/>
        <dbReference type="ChEBI" id="CHEBI:15378"/>
        <dbReference type="ChEBI" id="CHEBI:57856"/>
        <dbReference type="ChEBI" id="CHEBI:59789"/>
        <dbReference type="ChEBI" id="CHEBI:87136"/>
        <dbReference type="ChEBI" id="CHEBI:87305"/>
        <dbReference type="EC" id="2.1.1.104"/>
    </reaction>
</comment>
<comment type="cofactor">
    <cofactor evidence="1">
        <name>a divalent metal cation</name>
        <dbReference type="ChEBI" id="CHEBI:60240"/>
    </cofactor>
    <text evidence="1">Binds 1 divalent metal cation per subunit.</text>
</comment>
<comment type="pathway">
    <text>Aromatic compound metabolism; phenylpropanoid biosynthesis.</text>
</comment>
<comment type="induction">
    <text>By salt stress.</text>
</comment>
<comment type="similarity">
    <text evidence="2">Belongs to the class I-like SAM-binding methyltransferase superfamily. Cation-dependent O-methyltransferase family. CCoAMT subfamily.</text>
</comment>
<evidence type="ECO:0000250" key="1">
    <source>
        <dbReference type="UniProtKB" id="Q40313"/>
    </source>
</evidence>
<evidence type="ECO:0000255" key="2">
    <source>
        <dbReference type="PROSITE-ProRule" id="PRU01019"/>
    </source>
</evidence>
<evidence type="ECO:0000256" key="3">
    <source>
        <dbReference type="SAM" id="MobiDB-lite"/>
    </source>
</evidence>
<accession>O65162</accession>
<reference key="1">
    <citation type="submission" date="1998-03" db="EMBL/GenBank/DDBJ databases">
        <title>Caffeoyl-CoA O-methyltransferase from Mesembryanthemum crystallinum.</title>
        <authorList>
            <person name="Michalowski C.B."/>
            <person name="Bohnert H.J."/>
        </authorList>
    </citation>
    <scope>NUCLEOTIDE SEQUENCE [MRNA]</scope>
    <source>
        <tissue>Root</tissue>
    </source>
</reference>
<organism>
    <name type="scientific">Mesembryanthemum crystallinum</name>
    <name type="common">Common ice plant</name>
    <name type="synonym">Cryophytum crystallinum</name>
    <dbReference type="NCBI Taxonomy" id="3544"/>
    <lineage>
        <taxon>Eukaryota</taxon>
        <taxon>Viridiplantae</taxon>
        <taxon>Streptophyta</taxon>
        <taxon>Embryophyta</taxon>
        <taxon>Tracheophyta</taxon>
        <taxon>Spermatophyta</taxon>
        <taxon>Magnoliopsida</taxon>
        <taxon>eudicotyledons</taxon>
        <taxon>Gunneridae</taxon>
        <taxon>Pentapetalae</taxon>
        <taxon>Caryophyllales</taxon>
        <taxon>Aizoaceae</taxon>
        <taxon>Mesembryanthemum</taxon>
        <taxon>Mesembryanthemum subgen. Cryophytum</taxon>
    </lineage>
</organism>